<name>LOLA_CUPTR</name>
<gene>
    <name evidence="1" type="primary">lolA</name>
    <name type="ordered locus">RALTA_A0743</name>
</gene>
<dbReference type="EMBL" id="CU633749">
    <property type="protein sequence ID" value="CAQ68715.1"/>
    <property type="molecule type" value="Genomic_DNA"/>
</dbReference>
<dbReference type="RefSeq" id="WP_012352052.1">
    <property type="nucleotide sequence ID" value="NC_010528.1"/>
</dbReference>
<dbReference type="SMR" id="B3R334"/>
<dbReference type="GeneID" id="29760896"/>
<dbReference type="KEGG" id="cti:RALTA_A0743"/>
<dbReference type="eggNOG" id="COG2834">
    <property type="taxonomic scope" value="Bacteria"/>
</dbReference>
<dbReference type="HOGENOM" id="CLU_087560_0_1_4"/>
<dbReference type="Proteomes" id="UP000001692">
    <property type="component" value="Chromosome 1"/>
</dbReference>
<dbReference type="GO" id="GO:0030288">
    <property type="term" value="C:outer membrane-bounded periplasmic space"/>
    <property type="evidence" value="ECO:0007669"/>
    <property type="project" value="TreeGrafter"/>
</dbReference>
<dbReference type="GO" id="GO:0044874">
    <property type="term" value="P:lipoprotein localization to outer membrane"/>
    <property type="evidence" value="ECO:0007669"/>
    <property type="project" value="UniProtKB-UniRule"/>
</dbReference>
<dbReference type="GO" id="GO:0042953">
    <property type="term" value="P:lipoprotein transport"/>
    <property type="evidence" value="ECO:0007669"/>
    <property type="project" value="InterPro"/>
</dbReference>
<dbReference type="CDD" id="cd16325">
    <property type="entry name" value="LolA"/>
    <property type="match status" value="1"/>
</dbReference>
<dbReference type="Gene3D" id="2.50.20.10">
    <property type="entry name" value="Lipoprotein localisation LolA/LolB/LppX"/>
    <property type="match status" value="1"/>
</dbReference>
<dbReference type="HAMAP" id="MF_00240">
    <property type="entry name" value="LolA"/>
    <property type="match status" value="1"/>
</dbReference>
<dbReference type="InterPro" id="IPR029046">
    <property type="entry name" value="LolA/LolB/LppX"/>
</dbReference>
<dbReference type="InterPro" id="IPR004564">
    <property type="entry name" value="OM_lipoprot_carrier_LolA-like"/>
</dbReference>
<dbReference type="InterPro" id="IPR018323">
    <property type="entry name" value="OM_lipoprot_carrier_LolA_Pbac"/>
</dbReference>
<dbReference type="NCBIfam" id="TIGR00547">
    <property type="entry name" value="lolA"/>
    <property type="match status" value="1"/>
</dbReference>
<dbReference type="NCBIfam" id="NF000661">
    <property type="entry name" value="PRK00031.1-3"/>
    <property type="match status" value="1"/>
</dbReference>
<dbReference type="PANTHER" id="PTHR35869">
    <property type="entry name" value="OUTER-MEMBRANE LIPOPROTEIN CARRIER PROTEIN"/>
    <property type="match status" value="1"/>
</dbReference>
<dbReference type="PANTHER" id="PTHR35869:SF1">
    <property type="entry name" value="OUTER-MEMBRANE LIPOPROTEIN CARRIER PROTEIN"/>
    <property type="match status" value="1"/>
</dbReference>
<dbReference type="Pfam" id="PF03548">
    <property type="entry name" value="LolA"/>
    <property type="match status" value="1"/>
</dbReference>
<dbReference type="SUPFAM" id="SSF89392">
    <property type="entry name" value="Prokaryotic lipoproteins and lipoprotein localization factors"/>
    <property type="match status" value="1"/>
</dbReference>
<evidence type="ECO:0000255" key="1">
    <source>
        <dbReference type="HAMAP-Rule" id="MF_00240"/>
    </source>
</evidence>
<comment type="function">
    <text evidence="1">Participates in the translocation of lipoproteins from the inner membrane to the outer membrane. Only forms a complex with a lipoprotein if the residue after the N-terminal Cys is not an aspartate (The Asp acts as a targeting signal to indicate that the lipoprotein should stay in the inner membrane).</text>
</comment>
<comment type="subunit">
    <text evidence="1">Monomer.</text>
</comment>
<comment type="subcellular location">
    <subcellularLocation>
        <location evidence="1">Periplasm</location>
    </subcellularLocation>
</comment>
<comment type="similarity">
    <text evidence="1">Belongs to the LolA family.</text>
</comment>
<sequence length="211" mass="23065">MRNRILVSACAALAMFAMQAPAHAAATDQLQSFVTGVKSARGEFTQRQVKGQGANVKVTGTSSGTFVFSRPGKFTWRYTKPYEQLLQADGQTLYIYDKDLNQVTERKLDGALGSSPAAILFGSNDLDKNFVVRNGPTRDGVEWLELTPKAKDTQFERIGIGFKAGNLEAMELRDAFGNTTLLTFTGMQKNPPLAADAFRFTVPKGADVMKQ</sequence>
<accession>B3R334</accession>
<feature type="signal peptide" evidence="1">
    <location>
        <begin position="1"/>
        <end position="24"/>
    </location>
</feature>
<feature type="chain" id="PRO_1000100715" description="Outer-membrane lipoprotein carrier protein">
    <location>
        <begin position="25"/>
        <end position="211"/>
    </location>
</feature>
<keyword id="KW-0143">Chaperone</keyword>
<keyword id="KW-0574">Periplasm</keyword>
<keyword id="KW-0653">Protein transport</keyword>
<keyword id="KW-0732">Signal</keyword>
<keyword id="KW-0813">Transport</keyword>
<proteinExistence type="inferred from homology"/>
<protein>
    <recommendedName>
        <fullName evidence="1">Outer-membrane lipoprotein carrier protein</fullName>
    </recommendedName>
</protein>
<organism>
    <name type="scientific">Cupriavidus taiwanensis (strain DSM 17343 / BCRC 17206 / CCUG 44338 / CIP 107171 / LMG 19424 / R1)</name>
    <name type="common">Ralstonia taiwanensis (strain LMG 19424)</name>
    <dbReference type="NCBI Taxonomy" id="977880"/>
    <lineage>
        <taxon>Bacteria</taxon>
        <taxon>Pseudomonadati</taxon>
        <taxon>Pseudomonadota</taxon>
        <taxon>Betaproteobacteria</taxon>
        <taxon>Burkholderiales</taxon>
        <taxon>Burkholderiaceae</taxon>
        <taxon>Cupriavidus</taxon>
    </lineage>
</organism>
<reference key="1">
    <citation type="journal article" date="2008" name="Genome Res.">
        <title>Genome sequence of the beta-rhizobium Cupriavidus taiwanensis and comparative genomics of rhizobia.</title>
        <authorList>
            <person name="Amadou C."/>
            <person name="Pascal G."/>
            <person name="Mangenot S."/>
            <person name="Glew M."/>
            <person name="Bontemps C."/>
            <person name="Capela D."/>
            <person name="Carrere S."/>
            <person name="Cruveiller S."/>
            <person name="Dossat C."/>
            <person name="Lajus A."/>
            <person name="Marchetti M."/>
            <person name="Poinsot V."/>
            <person name="Rouy Z."/>
            <person name="Servin B."/>
            <person name="Saad M."/>
            <person name="Schenowitz C."/>
            <person name="Barbe V."/>
            <person name="Batut J."/>
            <person name="Medigue C."/>
            <person name="Masson-Boivin C."/>
        </authorList>
    </citation>
    <scope>NUCLEOTIDE SEQUENCE [LARGE SCALE GENOMIC DNA]</scope>
    <source>
        <strain>DSM 17343 / BCRC 17206 / CCUG 44338 / CIP 107171 / LMG 19424 / R1</strain>
    </source>
</reference>